<accession>O59729</accession>
<dbReference type="EMBL" id="CU329671">
    <property type="protein sequence ID" value="CAA19012.1"/>
    <property type="molecule type" value="Genomic_DNA"/>
</dbReference>
<dbReference type="PIR" id="T40383">
    <property type="entry name" value="T40383"/>
</dbReference>
<dbReference type="RefSeq" id="NP_596096.1">
    <property type="nucleotide sequence ID" value="NM_001022012.2"/>
</dbReference>
<dbReference type="SMR" id="O59729"/>
<dbReference type="BioGRID" id="276806">
    <property type="interactions" value="1"/>
</dbReference>
<dbReference type="FunCoup" id="O59729">
    <property type="interactions" value="27"/>
</dbReference>
<dbReference type="STRING" id="284812.O59729"/>
<dbReference type="iPTMnet" id="O59729"/>
<dbReference type="PaxDb" id="4896-SPBC3E7.09.1"/>
<dbReference type="EnsemblFungi" id="SPBC3E7.09.1">
    <property type="protein sequence ID" value="SPBC3E7.09.1:pep"/>
    <property type="gene ID" value="SPBC3E7.09"/>
</dbReference>
<dbReference type="KEGG" id="spo:2540275"/>
<dbReference type="PomBase" id="SPBC3E7.09"/>
<dbReference type="VEuPathDB" id="FungiDB:SPBC3E7.09"/>
<dbReference type="eggNOG" id="KOG1396">
    <property type="taxonomic scope" value="Eukaryota"/>
</dbReference>
<dbReference type="HOGENOM" id="CLU_416284_0_0_1"/>
<dbReference type="InParanoid" id="O59729"/>
<dbReference type="OMA" id="YESSWME"/>
<dbReference type="PhylomeDB" id="O59729"/>
<dbReference type="PRO" id="PR:O59729"/>
<dbReference type="Proteomes" id="UP000002485">
    <property type="component" value="Chromosome II"/>
</dbReference>
<dbReference type="GO" id="GO:0005737">
    <property type="term" value="C:cytoplasm"/>
    <property type="evidence" value="ECO:0000318"/>
    <property type="project" value="GO_Central"/>
</dbReference>
<dbReference type="GO" id="GO:0005789">
    <property type="term" value="C:endoplasmic reticulum membrane"/>
    <property type="evidence" value="ECO:0000266"/>
    <property type="project" value="PomBase"/>
</dbReference>
<dbReference type="GO" id="GO:0016020">
    <property type="term" value="C:membrane"/>
    <property type="evidence" value="ECO:0000318"/>
    <property type="project" value="GO_Central"/>
</dbReference>
<dbReference type="GO" id="GO:0034975">
    <property type="term" value="P:protein folding in endoplasmic reticulum"/>
    <property type="evidence" value="ECO:0000266"/>
    <property type="project" value="PomBase"/>
</dbReference>
<dbReference type="FunFam" id="2.60.120.260:FF:000099">
    <property type="entry name" value="Uncharacterized protein, isoform C"/>
    <property type="match status" value="1"/>
</dbReference>
<dbReference type="Gene3D" id="2.60.120.260">
    <property type="entry name" value="Galactose-binding domain-like"/>
    <property type="match status" value="1"/>
</dbReference>
<dbReference type="InterPro" id="IPR045120">
    <property type="entry name" value="Suco/Slp1-like"/>
</dbReference>
<dbReference type="InterPro" id="IPR012919">
    <property type="entry name" value="SUN_dom"/>
</dbReference>
<dbReference type="PANTHER" id="PTHR12953">
    <property type="entry name" value="MEMBRANE PROTEIN CH1 RELATED"/>
    <property type="match status" value="1"/>
</dbReference>
<dbReference type="PANTHER" id="PTHR12953:SF0">
    <property type="entry name" value="SUN DOMAIN-CONTAINING OSSIFICATION FACTOR"/>
    <property type="match status" value="1"/>
</dbReference>
<dbReference type="Pfam" id="PF07738">
    <property type="entry name" value="Sad1_UNC"/>
    <property type="match status" value="1"/>
</dbReference>
<dbReference type="PROSITE" id="PS51469">
    <property type="entry name" value="SUN"/>
    <property type="match status" value="1"/>
</dbReference>
<proteinExistence type="inferred from homology"/>
<name>SLPI_SCHPO</name>
<feature type="signal peptide" evidence="2">
    <location>
        <begin position="1"/>
        <end position="25"/>
    </location>
</feature>
<feature type="chain" id="PRO_0000363387" description="Uncharacterized protein slp1">
    <location>
        <begin position="26"/>
        <end position="659"/>
    </location>
</feature>
<feature type="topological domain" description="Lumenal" evidence="1">
    <location>
        <begin position="26"/>
        <end position="556"/>
    </location>
</feature>
<feature type="transmembrane region" description="Helical" evidence="2">
    <location>
        <begin position="557"/>
        <end position="574"/>
    </location>
</feature>
<feature type="topological domain" description="Cytoplasmic" evidence="1">
    <location>
        <begin position="575"/>
        <end position="659"/>
    </location>
</feature>
<feature type="domain" description="SUN" evidence="4">
    <location>
        <begin position="173"/>
        <end position="335"/>
    </location>
</feature>
<feature type="region of interest" description="Disordered" evidence="5">
    <location>
        <begin position="417"/>
        <end position="445"/>
    </location>
</feature>
<feature type="region of interest" description="Disordered" evidence="5">
    <location>
        <begin position="580"/>
        <end position="603"/>
    </location>
</feature>
<feature type="region of interest" description="Disordered" evidence="5">
    <location>
        <begin position="632"/>
        <end position="659"/>
    </location>
</feature>
<feature type="compositionally biased region" description="Polar residues" evidence="5">
    <location>
        <begin position="423"/>
        <end position="434"/>
    </location>
</feature>
<feature type="compositionally biased region" description="Polar residues" evidence="5">
    <location>
        <begin position="581"/>
        <end position="592"/>
    </location>
</feature>
<feature type="compositionally biased region" description="Basic and acidic residues" evidence="5">
    <location>
        <begin position="641"/>
        <end position="651"/>
    </location>
</feature>
<feature type="glycosylation site" description="N-linked (GlcNAc...) asparagine" evidence="3">
    <location>
        <position position="94"/>
    </location>
</feature>
<feature type="glycosylation site" description="N-linked (GlcNAc...) asparagine" evidence="3">
    <location>
        <position position="111"/>
    </location>
</feature>
<feature type="glycosylation site" description="N-linked (GlcNAc...) asparagine" evidence="3">
    <location>
        <position position="128"/>
    </location>
</feature>
<feature type="glycosylation site" description="N-linked (GlcNAc...) asparagine" evidence="3">
    <location>
        <position position="142"/>
    </location>
</feature>
<feature type="glycosylation site" description="N-linked (GlcNAc...) asparagine" evidence="3">
    <location>
        <position position="393"/>
    </location>
</feature>
<feature type="glycosylation site" description="N-linked (GlcNAc...) asparagine" evidence="3">
    <location>
        <position position="415"/>
    </location>
</feature>
<feature type="glycosylation site" description="N-linked (GlcNAc...) asparagine" evidence="3">
    <location>
        <position position="495"/>
    </location>
</feature>
<feature type="glycosylation site" description="N-linked (GlcNAc...) asparagine" evidence="3">
    <location>
        <position position="504"/>
    </location>
</feature>
<organism>
    <name type="scientific">Schizosaccharomyces pombe (strain 972 / ATCC 24843)</name>
    <name type="common">Fission yeast</name>
    <dbReference type="NCBI Taxonomy" id="284812"/>
    <lineage>
        <taxon>Eukaryota</taxon>
        <taxon>Fungi</taxon>
        <taxon>Dikarya</taxon>
        <taxon>Ascomycota</taxon>
        <taxon>Taphrinomycotina</taxon>
        <taxon>Schizosaccharomycetes</taxon>
        <taxon>Schizosaccharomycetales</taxon>
        <taxon>Schizosaccharomycetaceae</taxon>
        <taxon>Schizosaccharomyces</taxon>
    </lineage>
</organism>
<reference key="1">
    <citation type="journal article" date="2002" name="Nature">
        <title>The genome sequence of Schizosaccharomyces pombe.</title>
        <authorList>
            <person name="Wood V."/>
            <person name="Gwilliam R."/>
            <person name="Rajandream M.A."/>
            <person name="Lyne M.H."/>
            <person name="Lyne R."/>
            <person name="Stewart A."/>
            <person name="Sgouros J.G."/>
            <person name="Peat N."/>
            <person name="Hayles J."/>
            <person name="Baker S.G."/>
            <person name="Basham D."/>
            <person name="Bowman S."/>
            <person name="Brooks K."/>
            <person name="Brown D."/>
            <person name="Brown S."/>
            <person name="Chillingworth T."/>
            <person name="Churcher C.M."/>
            <person name="Collins M."/>
            <person name="Connor R."/>
            <person name="Cronin A."/>
            <person name="Davis P."/>
            <person name="Feltwell T."/>
            <person name="Fraser A."/>
            <person name="Gentles S."/>
            <person name="Goble A."/>
            <person name="Hamlin N."/>
            <person name="Harris D.E."/>
            <person name="Hidalgo J."/>
            <person name="Hodgson G."/>
            <person name="Holroyd S."/>
            <person name="Hornsby T."/>
            <person name="Howarth S."/>
            <person name="Huckle E.J."/>
            <person name="Hunt S."/>
            <person name="Jagels K."/>
            <person name="James K.D."/>
            <person name="Jones L."/>
            <person name="Jones M."/>
            <person name="Leather S."/>
            <person name="McDonald S."/>
            <person name="McLean J."/>
            <person name="Mooney P."/>
            <person name="Moule S."/>
            <person name="Mungall K.L."/>
            <person name="Murphy L.D."/>
            <person name="Niblett D."/>
            <person name="Odell C."/>
            <person name="Oliver K."/>
            <person name="O'Neil S."/>
            <person name="Pearson D."/>
            <person name="Quail M.A."/>
            <person name="Rabbinowitsch E."/>
            <person name="Rutherford K.M."/>
            <person name="Rutter S."/>
            <person name="Saunders D."/>
            <person name="Seeger K."/>
            <person name="Sharp S."/>
            <person name="Skelton J."/>
            <person name="Simmonds M.N."/>
            <person name="Squares R."/>
            <person name="Squares S."/>
            <person name="Stevens K."/>
            <person name="Taylor K."/>
            <person name="Taylor R.G."/>
            <person name="Tivey A."/>
            <person name="Walsh S.V."/>
            <person name="Warren T."/>
            <person name="Whitehead S."/>
            <person name="Woodward J.R."/>
            <person name="Volckaert G."/>
            <person name="Aert R."/>
            <person name="Robben J."/>
            <person name="Grymonprez B."/>
            <person name="Weltjens I."/>
            <person name="Vanstreels E."/>
            <person name="Rieger M."/>
            <person name="Schaefer M."/>
            <person name="Mueller-Auer S."/>
            <person name="Gabel C."/>
            <person name="Fuchs M."/>
            <person name="Duesterhoeft A."/>
            <person name="Fritzc C."/>
            <person name="Holzer E."/>
            <person name="Moestl D."/>
            <person name="Hilbert H."/>
            <person name="Borzym K."/>
            <person name="Langer I."/>
            <person name="Beck A."/>
            <person name="Lehrach H."/>
            <person name="Reinhardt R."/>
            <person name="Pohl T.M."/>
            <person name="Eger P."/>
            <person name="Zimmermann W."/>
            <person name="Wedler H."/>
            <person name="Wambutt R."/>
            <person name="Purnelle B."/>
            <person name="Goffeau A."/>
            <person name="Cadieu E."/>
            <person name="Dreano S."/>
            <person name="Gloux S."/>
            <person name="Lelaure V."/>
            <person name="Mottier S."/>
            <person name="Galibert F."/>
            <person name="Aves S.J."/>
            <person name="Xiang Z."/>
            <person name="Hunt C."/>
            <person name="Moore K."/>
            <person name="Hurst S.M."/>
            <person name="Lucas M."/>
            <person name="Rochet M."/>
            <person name="Gaillardin C."/>
            <person name="Tallada V.A."/>
            <person name="Garzon A."/>
            <person name="Thode G."/>
            <person name="Daga R.R."/>
            <person name="Cruzado L."/>
            <person name="Jimenez J."/>
            <person name="Sanchez M."/>
            <person name="del Rey F."/>
            <person name="Benito J."/>
            <person name="Dominguez A."/>
            <person name="Revuelta J.L."/>
            <person name="Moreno S."/>
            <person name="Armstrong J."/>
            <person name="Forsburg S.L."/>
            <person name="Cerutti L."/>
            <person name="Lowe T."/>
            <person name="McCombie W.R."/>
            <person name="Paulsen I."/>
            <person name="Potashkin J."/>
            <person name="Shpakovski G.V."/>
            <person name="Ussery D."/>
            <person name="Barrell B.G."/>
            <person name="Nurse P."/>
        </authorList>
    </citation>
    <scope>NUCLEOTIDE SEQUENCE [LARGE SCALE GENOMIC DNA]</scope>
    <source>
        <strain>972 / ATCC 24843</strain>
    </source>
</reference>
<keyword id="KW-0256">Endoplasmic reticulum</keyword>
<keyword id="KW-0325">Glycoprotein</keyword>
<keyword id="KW-0472">Membrane</keyword>
<keyword id="KW-1185">Reference proteome</keyword>
<keyword id="KW-0732">Signal</keyword>
<keyword id="KW-0812">Transmembrane</keyword>
<keyword id="KW-1133">Transmembrane helix</keyword>
<comment type="function">
    <text evidence="1">May be involved in membrane protein folding.</text>
</comment>
<comment type="subunit">
    <text evidence="1">Interacts with EMP65.</text>
</comment>
<comment type="subcellular location">
    <subcellularLocation>
        <location evidence="1">Endoplasmic reticulum membrane</location>
        <topology evidence="2">Single-pass type I membrane protein</topology>
    </subcellularLocation>
</comment>
<comment type="similarity">
    <text evidence="6">Belongs to the SLP1 family.</text>
</comment>
<gene>
    <name evidence="7" type="ORF">SPBC3E7.09</name>
</gene>
<protein>
    <recommendedName>
        <fullName evidence="1">Uncharacterized protein slp1</fullName>
    </recommendedName>
    <alternativeName>
        <fullName evidence="1">SUN-like protein 1</fullName>
    </alternativeName>
</protein>
<sequence>MVKRRLSAFGNAFLIYFIIFRLCCCSPQTSHWCKYPALCLKSPDTHNENLVCDAYLSVIATKSEEKEASNPTTWDFTPTNKYQEPSFHTKTSLNGSDTISSNFLSKYEYSNGTSTSEFIDSISPPLVNETSTISSSKKLEQNYSVTEVIDTNIITSSSVTLPISEDGSSTSAAATIDSNIDEKTVAFSEEKRFNFASTDCAAAVIKTNPEAVGSSSILTENKDKYMLNKCSAENKFVVIELCEDIYVDTVQIANFEFFSSIFRDFKVSVSGKYPKYESSWMELGTFTALNLRTLQSFHIENPLIWAKYLKIEFLTHYGSEFYCPVSLLRVYGKTMIEEFEEANEDFLEQKVNDGSAIKADEIRKPQESPIFVDEEDTDVQSKPVRKNPSVELNSTDTLLSSTVISKSLSTVVIGNETGKSESYPATSTRSFNDISPSSSSSYSTAQISTFPSNQESIYKNINKRLSTLEERKKAFDEIVEKILTNYGKHNAKNMNFTQLLHELNSTLQLEISKLSKSVVKPSLFALQAKLELLSAENEYFQSQITSLYQESSFQKRLLMLQLTVLIVLTVYMAVSRLPENLPTTRSSSNNPIEASRPPFSRDEQDISKANDFRVSASSAVYTVGPELLQRKKRDPNTSIRSIHEREQDKIIHSRSHSVC</sequence>
<evidence type="ECO:0000250" key="1">
    <source>
        <dbReference type="UniProtKB" id="Q12232"/>
    </source>
</evidence>
<evidence type="ECO:0000255" key="2"/>
<evidence type="ECO:0000255" key="3">
    <source>
        <dbReference type="PROSITE-ProRule" id="PRU00498"/>
    </source>
</evidence>
<evidence type="ECO:0000255" key="4">
    <source>
        <dbReference type="PROSITE-ProRule" id="PRU00802"/>
    </source>
</evidence>
<evidence type="ECO:0000256" key="5">
    <source>
        <dbReference type="SAM" id="MobiDB-lite"/>
    </source>
</evidence>
<evidence type="ECO:0000305" key="6"/>
<evidence type="ECO:0000312" key="7">
    <source>
        <dbReference type="PomBase" id="SPBC3E7.09"/>
    </source>
</evidence>